<sequence>MQLKNPILGLCQQATFMLSAAKVDQCPDDEGFEVAFAGRSNAGKSSALNTLTHASLARTSKTPGRTQLLNFFKLDDDRRLVDLPGYGYAKVPIPLKQHWQRHLEAYLGSRESLKGLILMMDIRHPMTDFDLLMLDWAVASGMPMHILLTKADKLTYGAAKNTLLKVQSQIRKGWGEAVTIQLFSAPKRMGLEEAYTVLAGWMELADKGAEAEA</sequence>
<feature type="chain" id="PRO_0000269477" description="Probable GTP-binding protein EngB">
    <location>
        <begin position="1"/>
        <end position="213"/>
    </location>
</feature>
<feature type="domain" description="EngB-type G" evidence="1">
    <location>
        <begin position="30"/>
        <end position="204"/>
    </location>
</feature>
<feature type="binding site" evidence="1">
    <location>
        <begin position="38"/>
        <end position="45"/>
    </location>
    <ligand>
        <name>GTP</name>
        <dbReference type="ChEBI" id="CHEBI:37565"/>
    </ligand>
</feature>
<feature type="binding site" evidence="1">
    <location>
        <position position="45"/>
    </location>
    <ligand>
        <name>Mg(2+)</name>
        <dbReference type="ChEBI" id="CHEBI:18420"/>
    </ligand>
</feature>
<feature type="binding site" evidence="1">
    <location>
        <begin position="64"/>
        <end position="68"/>
    </location>
    <ligand>
        <name>GTP</name>
        <dbReference type="ChEBI" id="CHEBI:37565"/>
    </ligand>
</feature>
<feature type="binding site" evidence="1">
    <location>
        <position position="66"/>
    </location>
    <ligand>
        <name>Mg(2+)</name>
        <dbReference type="ChEBI" id="CHEBI:18420"/>
    </ligand>
</feature>
<feature type="binding site" evidence="1">
    <location>
        <begin position="82"/>
        <end position="85"/>
    </location>
    <ligand>
        <name>GTP</name>
        <dbReference type="ChEBI" id="CHEBI:37565"/>
    </ligand>
</feature>
<feature type="binding site" evidence="1">
    <location>
        <begin position="149"/>
        <end position="152"/>
    </location>
    <ligand>
        <name>GTP</name>
        <dbReference type="ChEBI" id="CHEBI:37565"/>
    </ligand>
</feature>
<feature type="binding site" evidence="1">
    <location>
        <begin position="182"/>
        <end position="185"/>
    </location>
    <ligand>
        <name>GTP</name>
        <dbReference type="ChEBI" id="CHEBI:37565"/>
    </ligand>
</feature>
<organism>
    <name type="scientific">Pseudomonas fluorescens (strain ATCC BAA-477 / NRRL B-23932 / Pf-5)</name>
    <dbReference type="NCBI Taxonomy" id="220664"/>
    <lineage>
        <taxon>Bacteria</taxon>
        <taxon>Pseudomonadati</taxon>
        <taxon>Pseudomonadota</taxon>
        <taxon>Gammaproteobacteria</taxon>
        <taxon>Pseudomonadales</taxon>
        <taxon>Pseudomonadaceae</taxon>
        <taxon>Pseudomonas</taxon>
    </lineage>
</organism>
<dbReference type="EMBL" id="CP000076">
    <property type="protein sequence ID" value="AAY95500.2"/>
    <property type="molecule type" value="Genomic_DNA"/>
</dbReference>
<dbReference type="SMR" id="Q4KKJ8"/>
<dbReference type="STRING" id="220664.PFL_0083"/>
<dbReference type="KEGG" id="pfl:PFL_0083"/>
<dbReference type="PATRIC" id="fig|220664.5.peg.86"/>
<dbReference type="eggNOG" id="COG0218">
    <property type="taxonomic scope" value="Bacteria"/>
</dbReference>
<dbReference type="HOGENOM" id="CLU_033732_1_0_6"/>
<dbReference type="Proteomes" id="UP000008540">
    <property type="component" value="Chromosome"/>
</dbReference>
<dbReference type="GO" id="GO:0005829">
    <property type="term" value="C:cytosol"/>
    <property type="evidence" value="ECO:0007669"/>
    <property type="project" value="TreeGrafter"/>
</dbReference>
<dbReference type="GO" id="GO:0005525">
    <property type="term" value="F:GTP binding"/>
    <property type="evidence" value="ECO:0007669"/>
    <property type="project" value="UniProtKB-UniRule"/>
</dbReference>
<dbReference type="GO" id="GO:0046872">
    <property type="term" value="F:metal ion binding"/>
    <property type="evidence" value="ECO:0007669"/>
    <property type="project" value="UniProtKB-KW"/>
</dbReference>
<dbReference type="GO" id="GO:0000917">
    <property type="term" value="P:division septum assembly"/>
    <property type="evidence" value="ECO:0007669"/>
    <property type="project" value="UniProtKB-KW"/>
</dbReference>
<dbReference type="CDD" id="cd01876">
    <property type="entry name" value="YihA_EngB"/>
    <property type="match status" value="1"/>
</dbReference>
<dbReference type="FunFam" id="3.40.50.300:FF:000098">
    <property type="entry name" value="Probable GTP-binding protein EngB"/>
    <property type="match status" value="1"/>
</dbReference>
<dbReference type="Gene3D" id="3.40.50.300">
    <property type="entry name" value="P-loop containing nucleotide triphosphate hydrolases"/>
    <property type="match status" value="1"/>
</dbReference>
<dbReference type="HAMAP" id="MF_00321">
    <property type="entry name" value="GTPase_EngB"/>
    <property type="match status" value="1"/>
</dbReference>
<dbReference type="InterPro" id="IPR030393">
    <property type="entry name" value="G_ENGB_dom"/>
</dbReference>
<dbReference type="InterPro" id="IPR006073">
    <property type="entry name" value="GTP-bd"/>
</dbReference>
<dbReference type="InterPro" id="IPR019987">
    <property type="entry name" value="GTP-bd_ribosome_bio_YsxC"/>
</dbReference>
<dbReference type="InterPro" id="IPR027417">
    <property type="entry name" value="P-loop_NTPase"/>
</dbReference>
<dbReference type="NCBIfam" id="TIGR03598">
    <property type="entry name" value="GTPase_YsxC"/>
    <property type="match status" value="1"/>
</dbReference>
<dbReference type="PANTHER" id="PTHR11649:SF13">
    <property type="entry name" value="ENGB-TYPE G DOMAIN-CONTAINING PROTEIN"/>
    <property type="match status" value="1"/>
</dbReference>
<dbReference type="PANTHER" id="PTHR11649">
    <property type="entry name" value="MSS1/TRME-RELATED GTP-BINDING PROTEIN"/>
    <property type="match status" value="1"/>
</dbReference>
<dbReference type="Pfam" id="PF01926">
    <property type="entry name" value="MMR_HSR1"/>
    <property type="match status" value="1"/>
</dbReference>
<dbReference type="SUPFAM" id="SSF52540">
    <property type="entry name" value="P-loop containing nucleoside triphosphate hydrolases"/>
    <property type="match status" value="1"/>
</dbReference>
<dbReference type="PROSITE" id="PS51706">
    <property type="entry name" value="G_ENGB"/>
    <property type="match status" value="1"/>
</dbReference>
<evidence type="ECO:0000255" key="1">
    <source>
        <dbReference type="HAMAP-Rule" id="MF_00321"/>
    </source>
</evidence>
<name>ENGB_PSEF5</name>
<gene>
    <name evidence="1" type="primary">engB</name>
    <name type="ordered locus">PFL_0083</name>
</gene>
<keyword id="KW-0131">Cell cycle</keyword>
<keyword id="KW-0132">Cell division</keyword>
<keyword id="KW-0342">GTP-binding</keyword>
<keyword id="KW-0460">Magnesium</keyword>
<keyword id="KW-0479">Metal-binding</keyword>
<keyword id="KW-0547">Nucleotide-binding</keyword>
<keyword id="KW-0717">Septation</keyword>
<protein>
    <recommendedName>
        <fullName evidence="1">Probable GTP-binding protein EngB</fullName>
    </recommendedName>
</protein>
<accession>Q4KKJ8</accession>
<proteinExistence type="inferred from homology"/>
<reference key="1">
    <citation type="journal article" date="2005" name="Nat. Biotechnol.">
        <title>Complete genome sequence of the plant commensal Pseudomonas fluorescens Pf-5.</title>
        <authorList>
            <person name="Paulsen I.T."/>
            <person name="Press C.M."/>
            <person name="Ravel J."/>
            <person name="Kobayashi D.Y."/>
            <person name="Myers G.S.A."/>
            <person name="Mavrodi D.V."/>
            <person name="DeBoy R.T."/>
            <person name="Seshadri R."/>
            <person name="Ren Q."/>
            <person name="Madupu R."/>
            <person name="Dodson R.J."/>
            <person name="Durkin A.S."/>
            <person name="Brinkac L.M."/>
            <person name="Daugherty S.C."/>
            <person name="Sullivan S.A."/>
            <person name="Rosovitz M.J."/>
            <person name="Gwinn M.L."/>
            <person name="Zhou L."/>
            <person name="Schneider D.J."/>
            <person name="Cartinhour S.W."/>
            <person name="Nelson W.C."/>
            <person name="Weidman J."/>
            <person name="Watkins K."/>
            <person name="Tran K."/>
            <person name="Khouri H."/>
            <person name="Pierson E.A."/>
            <person name="Pierson L.S. III"/>
            <person name="Thomashow L.S."/>
            <person name="Loper J.E."/>
        </authorList>
    </citation>
    <scope>NUCLEOTIDE SEQUENCE [LARGE SCALE GENOMIC DNA]</scope>
    <source>
        <strain>ATCC BAA-477 / NRRL B-23932 / Pf-5</strain>
    </source>
</reference>
<comment type="function">
    <text evidence="1">Necessary for normal cell division and for the maintenance of normal septation.</text>
</comment>
<comment type="cofactor">
    <cofactor evidence="1">
        <name>Mg(2+)</name>
        <dbReference type="ChEBI" id="CHEBI:18420"/>
    </cofactor>
</comment>
<comment type="similarity">
    <text evidence="1">Belongs to the TRAFAC class TrmE-Era-EngA-EngB-Septin-like GTPase superfamily. EngB GTPase family.</text>
</comment>